<comment type="function">
    <text>May play a role in alveolar type II cells through interaction with the surfactant protein SFTPA1 (SP-A).</text>
</comment>
<comment type="subunit">
    <text>Monomer. Binds to SFTPA1 in a Ca(2+)-dependent manner.</text>
</comment>
<comment type="subcellular location">
    <subcellularLocation>
        <location evidence="3">Zymogen granule membrane</location>
        <topology evidence="3">Peripheral membrane protein</topology>
    </subcellularLocation>
</comment>
<comment type="domain">
    <text>A pair of annexin repeats may form one binding site for calcium and phospholipid.</text>
</comment>
<comment type="miscellaneous">
    <text>Seems to bind one calcium ion with high affinity.</text>
</comment>
<comment type="similarity">
    <text evidence="4 5">Belongs to the annexin family.</text>
</comment>
<reference key="1">
    <citation type="journal article" date="1988" name="Biochem. Biophys. Res. Commun.">
        <title>Cloning and characterization of a cDNA encoding bovine endonexin (chromobindin 4).</title>
        <authorList>
            <person name="Hamman H.C."/>
            <person name="Gaffey L.C."/>
            <person name="Lynch K.R."/>
            <person name="Creutz C.E."/>
        </authorList>
    </citation>
    <scope>NUCLEOTIDE SEQUENCE [MRNA]</scope>
    <source>
        <tissue>Liver</tissue>
    </source>
</reference>
<reference key="2">
    <citation type="journal article" date="1996" name="J. Biol. Chem.">
        <title>Characterization of carbohydrate-binding protein p33/41: relation with annexin IV, molecular basis of the doublet forms (p33 and p41), and modulation of the carbohydrate binding activity by phospholipids.</title>
        <authorList>
            <person name="Kojima K."/>
            <person name="Yamamoto K."/>
            <person name="Irimura T."/>
            <person name="Osawa T."/>
            <person name="Ogawa H."/>
            <person name="Matsumoto I."/>
        </authorList>
    </citation>
    <scope>NUCLEOTIDE SEQUENCE [MRNA]</scope>
    <scope>PARTIAL PROTEIN SEQUENCE</scope>
</reference>
<reference key="3">
    <citation type="submission" date="2005-08" db="EMBL/GenBank/DDBJ databases">
        <authorList>
            <consortium name="NIH - Mammalian Gene Collection (MGC) project"/>
        </authorList>
    </citation>
    <scope>NUCLEOTIDE SEQUENCE [LARGE SCALE MRNA]</scope>
    <source>
        <strain>Crossbred X Angus</strain>
        <tissue>Ileum</tissue>
    </source>
</reference>
<reference key="4">
    <citation type="journal article" date="1992" name="J. Biol. Chem.">
        <title>Carbohydrate-binding proteins in bovine kidney have consensus amino acid sequences of annexin family proteins.</title>
        <authorList>
            <person name="Kojima K."/>
            <person name="Ogawa H.K."/>
            <person name="Seno N."/>
            <person name="Yamamoto K."/>
            <person name="Irimura T."/>
            <person name="Osawa T."/>
            <person name="Matsumoto I."/>
        </authorList>
    </citation>
    <scope>PROTEIN SEQUENCE OF 10-24; 28-48; 101-118; 194-212 AND 260-288</scope>
    <source>
        <tissue>Kidney</tissue>
    </source>
</reference>
<reference key="5">
    <citation type="journal article" date="1995" name="Biochem. J.">
        <title>Ca(2+)-dependent binding of annexin IV to surfactant protein A and lamellar bodies in alveolar type II cells.</title>
        <authorList>
            <person name="Sohma H."/>
            <person name="Matsushima N."/>
            <person name="Watanabe T."/>
            <person name="Hattori A."/>
            <person name="Kuroki Y."/>
            <person name="Akino T."/>
        </authorList>
    </citation>
    <scope>PROTEIN SEQUENCE OF 29-44; 111-118; 162-190 AND 226-235</scope>
    <scope>INTERACTION WITH SFTPA1</scope>
</reference>
<reference key="6">
    <citation type="submission" date="1995-09" db="PDB data bank">
        <authorList>
            <person name="Sutton R.B."/>
            <person name="Sprang S.R."/>
        </authorList>
    </citation>
    <scope>X-RAY CRYSTALLOGRAPHY (2.3 ANGSTROMS)</scope>
</reference>
<reference key="7">
    <citation type="journal article" date="1998" name="Biochem. J.">
        <title>Structure of the trigonal crystal form of bovine annexin IV.</title>
        <authorList>
            <person name="Zanotti G."/>
            <person name="Malpeli G."/>
            <person name="Gliubich F."/>
            <person name="Folli C."/>
            <person name="Stoppini M."/>
            <person name="Olivi L."/>
            <person name="Savoia A."/>
            <person name="Berni R."/>
        </authorList>
    </citation>
    <scope>X-RAY CRYSTALLOGRAPHY (3 ANGSTROMS)</scope>
</reference>
<protein>
    <recommendedName>
        <fullName>Annexin A4</fullName>
    </recommendedName>
    <alternativeName>
        <fullName>35-beta calcimedin</fullName>
    </alternativeName>
    <alternativeName>
        <fullName>Annexin IV</fullName>
    </alternativeName>
    <alternativeName>
        <fullName>Annexin-4</fullName>
    </alternativeName>
    <alternativeName>
        <fullName>Carbohydrate-binding protein p33/p41</fullName>
    </alternativeName>
    <alternativeName>
        <fullName>Chromobindin-4</fullName>
    </alternativeName>
    <alternativeName>
        <fullName>Endonexin I</fullName>
    </alternativeName>
    <alternativeName>
        <fullName>Lipocortin IV</fullName>
    </alternativeName>
    <alternativeName>
        <fullName>P32.5</fullName>
    </alternativeName>
    <alternativeName>
        <fullName>PP4-X</fullName>
    </alternativeName>
    <alternativeName>
        <fullName>Placental anticoagulant protein II</fullName>
        <shortName>PAP-II</shortName>
    </alternativeName>
    <alternativeName>
        <fullName>Protein II</fullName>
    </alternativeName>
</protein>
<proteinExistence type="evidence at protein level"/>
<keyword id="KW-0002">3D-structure</keyword>
<keyword id="KW-0007">Acetylation</keyword>
<keyword id="KW-0041">Annexin</keyword>
<keyword id="KW-0106">Calcium</keyword>
<keyword id="KW-0111">Calcium/phospholipid-binding</keyword>
<keyword id="KW-0968">Cytoplasmic vesicle</keyword>
<keyword id="KW-0903">Direct protein sequencing</keyword>
<keyword id="KW-0472">Membrane</keyword>
<keyword id="KW-0597">Phosphoprotein</keyword>
<keyword id="KW-1185">Reference proteome</keyword>
<keyword id="KW-0677">Repeat</keyword>
<dbReference type="EMBL" id="M22248">
    <property type="protein sequence ID" value="AAA30507.1"/>
    <property type="molecule type" value="mRNA"/>
</dbReference>
<dbReference type="EMBL" id="X13627">
    <property type="protein sequence ID" value="CAA31954.1"/>
    <property type="molecule type" value="mRNA"/>
</dbReference>
<dbReference type="EMBL" id="D78178">
    <property type="protein sequence ID" value="BAA11243.1"/>
    <property type="molecule type" value="mRNA"/>
</dbReference>
<dbReference type="EMBL" id="BC103381">
    <property type="protein sequence ID" value="AAI03382.1"/>
    <property type="molecule type" value="mRNA"/>
</dbReference>
<dbReference type="PIR" id="A31578">
    <property type="entry name" value="LUBO4"/>
</dbReference>
<dbReference type="RefSeq" id="NP_001001440.2">
    <property type="nucleotide sequence ID" value="NM_001001440.2"/>
</dbReference>
<dbReference type="PDB" id="1ANN">
    <property type="method" value="X-ray"/>
    <property type="resolution" value="2.30 A"/>
    <property type="chains" value="A=2-319"/>
</dbReference>
<dbReference type="PDB" id="1AOW">
    <property type="method" value="X-ray"/>
    <property type="resolution" value="3.00 A"/>
    <property type="chains" value="A=11-319"/>
</dbReference>
<dbReference type="PDB" id="1I4A">
    <property type="method" value="X-ray"/>
    <property type="resolution" value="2.00 A"/>
    <property type="chains" value="A=2-319"/>
</dbReference>
<dbReference type="PDBsum" id="1ANN"/>
<dbReference type="PDBsum" id="1AOW"/>
<dbReference type="PDBsum" id="1I4A"/>
<dbReference type="SMR" id="P13214"/>
<dbReference type="FunCoup" id="P13214">
    <property type="interactions" value="1156"/>
</dbReference>
<dbReference type="STRING" id="9913.ENSBTAP00000001463"/>
<dbReference type="ChEMBL" id="CHEMBL3308973"/>
<dbReference type="PaxDb" id="9913-ENSBTAP00000001463"/>
<dbReference type="PeptideAtlas" id="P13214"/>
<dbReference type="GeneID" id="281625"/>
<dbReference type="KEGG" id="bta:281625"/>
<dbReference type="CTD" id="307"/>
<dbReference type="VEuPathDB" id="HostDB:ENSBTAG00000001105"/>
<dbReference type="eggNOG" id="KOG0819">
    <property type="taxonomic scope" value="Eukaryota"/>
</dbReference>
<dbReference type="HOGENOM" id="CLU_025300_0_0_1"/>
<dbReference type="InParanoid" id="P13214"/>
<dbReference type="OMA" id="ASNWVIM"/>
<dbReference type="OrthoDB" id="37886at2759"/>
<dbReference type="TreeFam" id="TF105452"/>
<dbReference type="EvolutionaryTrace" id="P13214"/>
<dbReference type="Proteomes" id="UP000009136">
    <property type="component" value="Chromosome 11"/>
</dbReference>
<dbReference type="Bgee" id="ENSBTAG00000001105">
    <property type="expression patterns" value="Expressed in urinary bladder and 108 other cell types or tissues"/>
</dbReference>
<dbReference type="GO" id="GO:0016324">
    <property type="term" value="C:apical plasma membrane"/>
    <property type="evidence" value="ECO:0000304"/>
    <property type="project" value="AgBase"/>
</dbReference>
<dbReference type="GO" id="GO:0042584">
    <property type="term" value="C:chromaffin granule membrane"/>
    <property type="evidence" value="ECO:0000314"/>
    <property type="project" value="AgBase"/>
</dbReference>
<dbReference type="GO" id="GO:0005737">
    <property type="term" value="C:cytoplasm"/>
    <property type="evidence" value="ECO:0000318"/>
    <property type="project" value="GO_Central"/>
</dbReference>
<dbReference type="GO" id="GO:0005829">
    <property type="term" value="C:cytosol"/>
    <property type="evidence" value="ECO:0000314"/>
    <property type="project" value="AgBase"/>
</dbReference>
<dbReference type="GO" id="GO:0016020">
    <property type="term" value="C:membrane"/>
    <property type="evidence" value="ECO:0000314"/>
    <property type="project" value="AgBase"/>
</dbReference>
<dbReference type="GO" id="GO:0005634">
    <property type="term" value="C:nucleus"/>
    <property type="evidence" value="ECO:0000314"/>
    <property type="project" value="AgBase"/>
</dbReference>
<dbReference type="GO" id="GO:0005886">
    <property type="term" value="C:plasma membrane"/>
    <property type="evidence" value="ECO:0000318"/>
    <property type="project" value="GO_Central"/>
</dbReference>
<dbReference type="GO" id="GO:0012506">
    <property type="term" value="C:vesicle membrane"/>
    <property type="evidence" value="ECO:0000318"/>
    <property type="project" value="GO_Central"/>
</dbReference>
<dbReference type="GO" id="GO:0042589">
    <property type="term" value="C:zymogen granule membrane"/>
    <property type="evidence" value="ECO:0007669"/>
    <property type="project" value="UniProtKB-SubCell"/>
</dbReference>
<dbReference type="GO" id="GO:0005509">
    <property type="term" value="F:calcium ion binding"/>
    <property type="evidence" value="ECO:0007669"/>
    <property type="project" value="InterPro"/>
</dbReference>
<dbReference type="GO" id="GO:0005544">
    <property type="term" value="F:calcium-dependent phospholipid binding"/>
    <property type="evidence" value="ECO:0000318"/>
    <property type="project" value="GO_Central"/>
</dbReference>
<dbReference type="GO" id="GO:0030246">
    <property type="term" value="F:carbohydrate binding"/>
    <property type="evidence" value="ECO:0000304"/>
    <property type="project" value="AgBase"/>
</dbReference>
<dbReference type="GO" id="GO:0035374">
    <property type="term" value="F:chondroitin sulfate binding"/>
    <property type="evidence" value="ECO:0000314"/>
    <property type="project" value="AgBase"/>
</dbReference>
<dbReference type="GO" id="GO:0008201">
    <property type="term" value="F:heparin binding"/>
    <property type="evidence" value="ECO:0000314"/>
    <property type="project" value="AgBase"/>
</dbReference>
<dbReference type="GO" id="GO:0001786">
    <property type="term" value="F:phosphatidylserine binding"/>
    <property type="evidence" value="ECO:0000318"/>
    <property type="project" value="GO_Central"/>
</dbReference>
<dbReference type="FunFam" id="1.10.220.10:FF:000001">
    <property type="entry name" value="Annexin"/>
    <property type="match status" value="1"/>
</dbReference>
<dbReference type="FunFam" id="1.10.220.10:FF:000002">
    <property type="entry name" value="Annexin"/>
    <property type="match status" value="1"/>
</dbReference>
<dbReference type="FunFam" id="1.10.220.10:FF:000003">
    <property type="entry name" value="Annexin"/>
    <property type="match status" value="1"/>
</dbReference>
<dbReference type="FunFam" id="1.10.220.10:FF:000004">
    <property type="entry name" value="Annexin"/>
    <property type="match status" value="1"/>
</dbReference>
<dbReference type="Gene3D" id="1.10.220.10">
    <property type="entry name" value="Annexin"/>
    <property type="match status" value="4"/>
</dbReference>
<dbReference type="InterPro" id="IPR001464">
    <property type="entry name" value="Annexin"/>
</dbReference>
<dbReference type="InterPro" id="IPR018502">
    <property type="entry name" value="Annexin_repeat"/>
</dbReference>
<dbReference type="InterPro" id="IPR018252">
    <property type="entry name" value="Annexin_repeat_CS"/>
</dbReference>
<dbReference type="InterPro" id="IPR037104">
    <property type="entry name" value="Annexin_sf"/>
</dbReference>
<dbReference type="InterPro" id="IPR002391">
    <property type="entry name" value="ANX4"/>
</dbReference>
<dbReference type="PANTHER" id="PTHR10502">
    <property type="entry name" value="ANNEXIN"/>
    <property type="match status" value="1"/>
</dbReference>
<dbReference type="PANTHER" id="PTHR10502:SF28">
    <property type="entry name" value="ANNEXIN A4"/>
    <property type="match status" value="1"/>
</dbReference>
<dbReference type="Pfam" id="PF00191">
    <property type="entry name" value="Annexin"/>
    <property type="match status" value="4"/>
</dbReference>
<dbReference type="PRINTS" id="PR00196">
    <property type="entry name" value="ANNEXIN"/>
</dbReference>
<dbReference type="PRINTS" id="PR00200">
    <property type="entry name" value="ANNEXINIV"/>
</dbReference>
<dbReference type="SMART" id="SM00335">
    <property type="entry name" value="ANX"/>
    <property type="match status" value="4"/>
</dbReference>
<dbReference type="SUPFAM" id="SSF47874">
    <property type="entry name" value="Annexin"/>
    <property type="match status" value="1"/>
</dbReference>
<dbReference type="PROSITE" id="PS00223">
    <property type="entry name" value="ANNEXIN_1"/>
    <property type="match status" value="4"/>
</dbReference>
<dbReference type="PROSITE" id="PS51897">
    <property type="entry name" value="ANNEXIN_2"/>
    <property type="match status" value="4"/>
</dbReference>
<evidence type="ECO:0000250" key="1">
    <source>
        <dbReference type="UniProtKB" id="P08132"/>
    </source>
</evidence>
<evidence type="ECO:0000250" key="2">
    <source>
        <dbReference type="UniProtKB" id="P09525"/>
    </source>
</evidence>
<evidence type="ECO:0000250" key="3">
    <source>
        <dbReference type="UniProtKB" id="P50994"/>
    </source>
</evidence>
<evidence type="ECO:0000255" key="4">
    <source>
        <dbReference type="PROSITE-ProRule" id="PRU01245"/>
    </source>
</evidence>
<evidence type="ECO:0000305" key="5"/>
<evidence type="ECO:0007829" key="6">
    <source>
        <dbReference type="PDB" id="1ANN"/>
    </source>
</evidence>
<evidence type="ECO:0007829" key="7">
    <source>
        <dbReference type="PDB" id="1I4A"/>
    </source>
</evidence>
<feature type="initiator methionine" description="Removed" evidence="2">
    <location>
        <position position="1"/>
    </location>
</feature>
<feature type="chain" id="PRO_0000067480" description="Annexin A4">
    <location>
        <begin position="2"/>
        <end position="319"/>
    </location>
</feature>
<feature type="repeat" description="Annexin 1" evidence="4">
    <location>
        <begin position="14"/>
        <end position="85"/>
    </location>
</feature>
<feature type="repeat" description="Annexin 2" evidence="4">
    <location>
        <begin position="86"/>
        <end position="157"/>
    </location>
</feature>
<feature type="repeat" description="Annexin 3" evidence="4">
    <location>
        <begin position="169"/>
        <end position="241"/>
    </location>
</feature>
<feature type="repeat" description="Annexin 4" evidence="4">
    <location>
        <begin position="245"/>
        <end position="316"/>
    </location>
</feature>
<feature type="modified residue" description="N-acetylalanine" evidence="2">
    <location>
        <position position="2"/>
    </location>
</feature>
<feature type="modified residue" description="Phosphothreonine" evidence="1">
    <location>
        <position position="7"/>
    </location>
</feature>
<feature type="modified residue" description="Phosphoserine" evidence="2">
    <location>
        <position position="12"/>
    </location>
</feature>
<feature type="modified residue" description="N6-acetyllysine" evidence="2">
    <location>
        <position position="213"/>
    </location>
</feature>
<feature type="modified residue" description="N6-acetyllysine" evidence="2">
    <location>
        <position position="293"/>
    </location>
</feature>
<feature type="modified residue" description="N6-acetyllysine" evidence="2">
    <location>
        <position position="300"/>
    </location>
</feature>
<feature type="sequence conflict" description="In Ref. 2; BAA11243." evidence="5" ref="2">
    <original>L</original>
    <variation>V</variation>
    <location>
        <position position="95"/>
    </location>
</feature>
<feature type="sequence conflict" description="In Ref. 4; AA sequence." evidence="5" ref="4">
    <original>C</original>
    <variation>Y</variation>
    <location>
        <position position="198"/>
    </location>
</feature>
<feature type="sequence conflict" description="In Ref. 2; BAA11243." evidence="5" ref="2">
    <original>E</original>
    <variation>K</variation>
    <location>
        <position position="211"/>
    </location>
</feature>
<feature type="helix" evidence="7">
    <location>
        <begin position="16"/>
        <end position="27"/>
    </location>
</feature>
<feature type="strand" evidence="7">
    <location>
        <begin position="28"/>
        <end position="31"/>
    </location>
</feature>
<feature type="helix" evidence="7">
    <location>
        <begin position="34"/>
        <end position="41"/>
    </location>
</feature>
<feature type="helix" evidence="7">
    <location>
        <begin position="46"/>
        <end position="60"/>
    </location>
</feature>
<feature type="helix" evidence="7">
    <location>
        <begin position="64"/>
        <end position="71"/>
    </location>
</feature>
<feature type="helix" evidence="7">
    <location>
        <begin position="74"/>
        <end position="84"/>
    </location>
</feature>
<feature type="helix" evidence="7">
    <location>
        <begin position="87"/>
        <end position="99"/>
    </location>
</feature>
<feature type="strand" evidence="7">
    <location>
        <begin position="100"/>
        <end position="103"/>
    </location>
</feature>
<feature type="helix" evidence="7">
    <location>
        <begin position="106"/>
        <end position="115"/>
    </location>
</feature>
<feature type="helix" evidence="7">
    <location>
        <begin position="118"/>
        <end position="132"/>
    </location>
</feature>
<feature type="helix" evidence="7">
    <location>
        <begin position="136"/>
        <end position="143"/>
    </location>
</feature>
<feature type="helix" evidence="7">
    <location>
        <begin position="146"/>
        <end position="156"/>
    </location>
</feature>
<feature type="helix" evidence="7">
    <location>
        <begin position="168"/>
        <end position="181"/>
    </location>
</feature>
<feature type="turn" evidence="6">
    <location>
        <begin position="184"/>
        <end position="186"/>
    </location>
</feature>
<feature type="helix" evidence="7">
    <location>
        <begin position="190"/>
        <end position="199"/>
    </location>
</feature>
<feature type="helix" evidence="7">
    <location>
        <begin position="202"/>
        <end position="216"/>
    </location>
</feature>
<feature type="helix" evidence="7">
    <location>
        <begin position="220"/>
        <end position="227"/>
    </location>
</feature>
<feature type="helix" evidence="7">
    <location>
        <begin position="230"/>
        <end position="258"/>
    </location>
</feature>
<feature type="strand" evidence="7">
    <location>
        <begin position="259"/>
        <end position="262"/>
    </location>
</feature>
<feature type="helix" evidence="7">
    <location>
        <begin position="265"/>
        <end position="275"/>
    </location>
</feature>
<feature type="turn" evidence="7">
    <location>
        <begin position="276"/>
        <end position="278"/>
    </location>
</feature>
<feature type="helix" evidence="7">
    <location>
        <begin position="280"/>
        <end position="291"/>
    </location>
</feature>
<feature type="helix" evidence="7">
    <location>
        <begin position="295"/>
        <end position="302"/>
    </location>
</feature>
<feature type="helix" evidence="7">
    <location>
        <begin position="305"/>
        <end position="315"/>
    </location>
</feature>
<organism>
    <name type="scientific">Bos taurus</name>
    <name type="common">Bovine</name>
    <dbReference type="NCBI Taxonomy" id="9913"/>
    <lineage>
        <taxon>Eukaryota</taxon>
        <taxon>Metazoa</taxon>
        <taxon>Chordata</taxon>
        <taxon>Craniata</taxon>
        <taxon>Vertebrata</taxon>
        <taxon>Euteleostomi</taxon>
        <taxon>Mammalia</taxon>
        <taxon>Eutheria</taxon>
        <taxon>Laurasiatheria</taxon>
        <taxon>Artiodactyla</taxon>
        <taxon>Ruminantia</taxon>
        <taxon>Pecora</taxon>
        <taxon>Bovidae</taxon>
        <taxon>Bovinae</taxon>
        <taxon>Bos</taxon>
    </lineage>
</organism>
<name>ANXA4_BOVIN</name>
<gene>
    <name type="primary">ANXA4</name>
    <name type="synonym">ANX4</name>
</gene>
<sequence length="319" mass="35889">MAAKGGTVKAASGFNAAEDAQTLRKAMKGLGTDEDAIINVLAYRSTAQRQEIRTAYKTTIGRDLMDDLKSELSGNFEQVILGMMTPTVLYDVQELRKAMKGAGTDEGCLIEILASRTPEEIRRINQTYQLQYGRSLEDDIRSDTSFMFQRVLVSLSAGGRDESNYLDDALMRQDAQDLYEAGEKKWGTDEVKFLTVLCSRNRNHLLHVFDEYKRIAQKDIEQSIKSETSGSFEDALLAIVKCMRNKSAYFAERLYKSMKGLGTDDDTLIRVMVSRAEIDMLDIRANFKRLYGKSLYSFIKGDTSGDYRKVLLILCGGDD</sequence>
<accession>P13214</accession>
<accession>Q3SYU5</accession>